<protein>
    <recommendedName>
        <fullName evidence="1">GTPase Obg</fullName>
        <ecNumber evidence="1">3.6.5.-</ecNumber>
    </recommendedName>
    <alternativeName>
        <fullName evidence="1">GTP-binding protein Obg</fullName>
    </alternativeName>
</protein>
<gene>
    <name evidence="1" type="primary">obg</name>
    <name type="ordered locus">Aasi_0267</name>
</gene>
<dbReference type="EC" id="3.6.5.-" evidence="1"/>
<dbReference type="EMBL" id="CP001102">
    <property type="protein sequence ID" value="ACE05707.1"/>
    <property type="molecule type" value="Genomic_DNA"/>
</dbReference>
<dbReference type="RefSeq" id="WP_012472468.1">
    <property type="nucleotide sequence ID" value="NC_010830.1"/>
</dbReference>
<dbReference type="SMR" id="B3ER55"/>
<dbReference type="STRING" id="452471.Aasi_0267"/>
<dbReference type="KEGG" id="aas:Aasi_0267"/>
<dbReference type="eggNOG" id="COG0536">
    <property type="taxonomic scope" value="Bacteria"/>
</dbReference>
<dbReference type="HOGENOM" id="CLU_011747_2_0_10"/>
<dbReference type="OrthoDB" id="9807318at2"/>
<dbReference type="Proteomes" id="UP000001227">
    <property type="component" value="Chromosome"/>
</dbReference>
<dbReference type="GO" id="GO:0005737">
    <property type="term" value="C:cytoplasm"/>
    <property type="evidence" value="ECO:0007669"/>
    <property type="project" value="UniProtKB-SubCell"/>
</dbReference>
<dbReference type="GO" id="GO:0005525">
    <property type="term" value="F:GTP binding"/>
    <property type="evidence" value="ECO:0007669"/>
    <property type="project" value="UniProtKB-UniRule"/>
</dbReference>
<dbReference type="GO" id="GO:0003924">
    <property type="term" value="F:GTPase activity"/>
    <property type="evidence" value="ECO:0007669"/>
    <property type="project" value="UniProtKB-UniRule"/>
</dbReference>
<dbReference type="GO" id="GO:0000287">
    <property type="term" value="F:magnesium ion binding"/>
    <property type="evidence" value="ECO:0007669"/>
    <property type="project" value="InterPro"/>
</dbReference>
<dbReference type="GO" id="GO:0042254">
    <property type="term" value="P:ribosome biogenesis"/>
    <property type="evidence" value="ECO:0007669"/>
    <property type="project" value="UniProtKB-UniRule"/>
</dbReference>
<dbReference type="CDD" id="cd01898">
    <property type="entry name" value="Obg"/>
    <property type="match status" value="1"/>
</dbReference>
<dbReference type="FunFam" id="2.70.210.12:FF:000001">
    <property type="entry name" value="GTPase Obg"/>
    <property type="match status" value="1"/>
</dbReference>
<dbReference type="Gene3D" id="2.70.210.12">
    <property type="entry name" value="GTP1/OBG domain"/>
    <property type="match status" value="1"/>
</dbReference>
<dbReference type="Gene3D" id="3.40.50.300">
    <property type="entry name" value="P-loop containing nucleotide triphosphate hydrolases"/>
    <property type="match status" value="1"/>
</dbReference>
<dbReference type="HAMAP" id="MF_01454">
    <property type="entry name" value="GTPase_Obg"/>
    <property type="match status" value="1"/>
</dbReference>
<dbReference type="InterPro" id="IPR031167">
    <property type="entry name" value="G_OBG"/>
</dbReference>
<dbReference type="InterPro" id="IPR006073">
    <property type="entry name" value="GTP-bd"/>
</dbReference>
<dbReference type="InterPro" id="IPR014100">
    <property type="entry name" value="GTP-bd_Obg/CgtA"/>
</dbReference>
<dbReference type="InterPro" id="IPR006074">
    <property type="entry name" value="GTP1-OBG_CS"/>
</dbReference>
<dbReference type="InterPro" id="IPR006169">
    <property type="entry name" value="GTP1_OBG_dom"/>
</dbReference>
<dbReference type="InterPro" id="IPR036726">
    <property type="entry name" value="GTP1_OBG_dom_sf"/>
</dbReference>
<dbReference type="InterPro" id="IPR045086">
    <property type="entry name" value="OBG_GTPase"/>
</dbReference>
<dbReference type="InterPro" id="IPR027417">
    <property type="entry name" value="P-loop_NTPase"/>
</dbReference>
<dbReference type="InterPro" id="IPR005225">
    <property type="entry name" value="Small_GTP-bd"/>
</dbReference>
<dbReference type="NCBIfam" id="TIGR02729">
    <property type="entry name" value="Obg_CgtA"/>
    <property type="match status" value="1"/>
</dbReference>
<dbReference type="NCBIfam" id="NF008955">
    <property type="entry name" value="PRK12297.1"/>
    <property type="match status" value="1"/>
</dbReference>
<dbReference type="NCBIfam" id="NF008956">
    <property type="entry name" value="PRK12299.1"/>
    <property type="match status" value="1"/>
</dbReference>
<dbReference type="NCBIfam" id="TIGR00231">
    <property type="entry name" value="small_GTP"/>
    <property type="match status" value="1"/>
</dbReference>
<dbReference type="PANTHER" id="PTHR11702">
    <property type="entry name" value="DEVELOPMENTALLY REGULATED GTP-BINDING PROTEIN-RELATED"/>
    <property type="match status" value="1"/>
</dbReference>
<dbReference type="PANTHER" id="PTHR11702:SF31">
    <property type="entry name" value="MITOCHONDRIAL RIBOSOME-ASSOCIATED GTPASE 2"/>
    <property type="match status" value="1"/>
</dbReference>
<dbReference type="Pfam" id="PF01018">
    <property type="entry name" value="GTP1_OBG"/>
    <property type="match status" value="1"/>
</dbReference>
<dbReference type="Pfam" id="PF01926">
    <property type="entry name" value="MMR_HSR1"/>
    <property type="match status" value="1"/>
</dbReference>
<dbReference type="PIRSF" id="PIRSF002401">
    <property type="entry name" value="GTP_bd_Obg/CgtA"/>
    <property type="match status" value="1"/>
</dbReference>
<dbReference type="PRINTS" id="PR00326">
    <property type="entry name" value="GTP1OBG"/>
</dbReference>
<dbReference type="SUPFAM" id="SSF82051">
    <property type="entry name" value="Obg GTP-binding protein N-terminal domain"/>
    <property type="match status" value="1"/>
</dbReference>
<dbReference type="SUPFAM" id="SSF52540">
    <property type="entry name" value="P-loop containing nucleoside triphosphate hydrolases"/>
    <property type="match status" value="1"/>
</dbReference>
<dbReference type="PROSITE" id="PS51710">
    <property type="entry name" value="G_OBG"/>
    <property type="match status" value="1"/>
</dbReference>
<dbReference type="PROSITE" id="PS00905">
    <property type="entry name" value="GTP1_OBG"/>
    <property type="match status" value="1"/>
</dbReference>
<dbReference type="PROSITE" id="PS51883">
    <property type="entry name" value="OBG"/>
    <property type="match status" value="1"/>
</dbReference>
<comment type="function">
    <text evidence="1">An essential GTPase which binds GTP, GDP and possibly (p)ppGpp with moderate affinity, with high nucleotide exchange rates and a fairly low GTP hydrolysis rate. Plays a role in control of the cell cycle, stress response, ribosome biogenesis and in those bacteria that undergo differentiation, in morphogenesis control.</text>
</comment>
<comment type="cofactor">
    <cofactor evidence="1">
        <name>Mg(2+)</name>
        <dbReference type="ChEBI" id="CHEBI:18420"/>
    </cofactor>
</comment>
<comment type="subunit">
    <text evidence="1">Monomer.</text>
</comment>
<comment type="subcellular location">
    <subcellularLocation>
        <location evidence="1">Cytoplasm</location>
    </subcellularLocation>
</comment>
<comment type="similarity">
    <text evidence="1">Belongs to the TRAFAC class OBG-HflX-like GTPase superfamily. OBG GTPase family.</text>
</comment>
<accession>B3ER55</accession>
<sequence length="334" mass="36019">MASFDFIDEVKKYVQAGHGGPGVVHFRREKFVPKGGPDGGDGGKGGDIILKGNKQLSTLLHLKYRKHIVAEDGKSGEGGCRTGADGTSIILEVPLGTVAKDIDSGNILVDITEDGQQTILLHGGRGGQGNVHFKTPTQQAPRHAQPGESGEEGWIKLELKLLAEVGLVGFPNAGKSTLLASISAAKPKIANYPFTTLVPQLGVVAYREGHSFVLADMPGIIEGASMGKGLGTRFLKHIERNRVLVLMISADDTANIVQTYTSLLKELKSYSEDLFKKPRILVISKLDLIGAEEKVTIKKLLPKQIDCVFISSVTGEGLQKFKDKIWKLLHPELK</sequence>
<name>OBG_AMOA5</name>
<keyword id="KW-0963">Cytoplasm</keyword>
<keyword id="KW-0342">GTP-binding</keyword>
<keyword id="KW-0378">Hydrolase</keyword>
<keyword id="KW-0460">Magnesium</keyword>
<keyword id="KW-0479">Metal-binding</keyword>
<keyword id="KW-0547">Nucleotide-binding</keyword>
<keyword id="KW-1185">Reference proteome</keyword>
<proteinExistence type="inferred from homology"/>
<feature type="chain" id="PRO_0000385688" description="GTPase Obg">
    <location>
        <begin position="1"/>
        <end position="334"/>
    </location>
</feature>
<feature type="domain" description="Obg" evidence="2">
    <location>
        <begin position="4"/>
        <end position="162"/>
    </location>
</feature>
<feature type="domain" description="OBG-type G" evidence="1">
    <location>
        <begin position="163"/>
        <end position="330"/>
    </location>
</feature>
<feature type="binding site" evidence="1">
    <location>
        <begin position="169"/>
        <end position="176"/>
    </location>
    <ligand>
        <name>GTP</name>
        <dbReference type="ChEBI" id="CHEBI:37565"/>
    </ligand>
</feature>
<feature type="binding site" evidence="1">
    <location>
        <position position="176"/>
    </location>
    <ligand>
        <name>Mg(2+)</name>
        <dbReference type="ChEBI" id="CHEBI:18420"/>
    </ligand>
</feature>
<feature type="binding site" evidence="1">
    <location>
        <begin position="194"/>
        <end position="198"/>
    </location>
    <ligand>
        <name>GTP</name>
        <dbReference type="ChEBI" id="CHEBI:37565"/>
    </ligand>
</feature>
<feature type="binding site" evidence="1">
    <location>
        <position position="196"/>
    </location>
    <ligand>
        <name>Mg(2+)</name>
        <dbReference type="ChEBI" id="CHEBI:18420"/>
    </ligand>
</feature>
<feature type="binding site" evidence="1">
    <location>
        <begin position="216"/>
        <end position="219"/>
    </location>
    <ligand>
        <name>GTP</name>
        <dbReference type="ChEBI" id="CHEBI:37565"/>
    </ligand>
</feature>
<feature type="binding site" evidence="1">
    <location>
        <begin position="284"/>
        <end position="287"/>
    </location>
    <ligand>
        <name>GTP</name>
        <dbReference type="ChEBI" id="CHEBI:37565"/>
    </ligand>
</feature>
<feature type="binding site" evidence="1">
    <location>
        <begin position="311"/>
        <end position="313"/>
    </location>
    <ligand>
        <name>GTP</name>
        <dbReference type="ChEBI" id="CHEBI:37565"/>
    </ligand>
</feature>
<evidence type="ECO:0000255" key="1">
    <source>
        <dbReference type="HAMAP-Rule" id="MF_01454"/>
    </source>
</evidence>
<evidence type="ECO:0000255" key="2">
    <source>
        <dbReference type="PROSITE-ProRule" id="PRU01231"/>
    </source>
</evidence>
<organism>
    <name type="scientific">Amoebophilus asiaticus (strain 5a2)</name>
    <dbReference type="NCBI Taxonomy" id="452471"/>
    <lineage>
        <taxon>Bacteria</taxon>
        <taxon>Pseudomonadati</taxon>
        <taxon>Bacteroidota</taxon>
        <taxon>Cytophagia</taxon>
        <taxon>Cytophagales</taxon>
        <taxon>Amoebophilaceae</taxon>
        <taxon>Candidatus Amoebophilus</taxon>
    </lineage>
</organism>
<reference key="1">
    <citation type="journal article" date="2010" name="J. Bacteriol.">
        <title>The genome of the amoeba symbiont 'Candidatus Amoebophilus asiaticus' reveals common mechanisms for host cell interaction among amoeba-associated bacteria.</title>
        <authorList>
            <person name="Schmitz-Esser S."/>
            <person name="Tischler P."/>
            <person name="Arnold R."/>
            <person name="Montanaro J."/>
            <person name="Wagner M."/>
            <person name="Rattei T."/>
            <person name="Horn M."/>
        </authorList>
    </citation>
    <scope>NUCLEOTIDE SEQUENCE [LARGE SCALE GENOMIC DNA]</scope>
    <source>
        <strain>5a2</strain>
    </source>
</reference>